<keyword id="KW-0560">Oxidoreductase</keyword>
<keyword id="KW-0819">tRNA processing</keyword>
<comment type="function">
    <text evidence="1">Catalyzes oxygen-dependent 5-hydroxyuridine (ho5U) modification at position 34 in tRNAs.</text>
</comment>
<comment type="catalytic activity">
    <reaction evidence="1">
        <text>uridine(34) in tRNA + AH2 + O2 = 5-hydroxyuridine(34) in tRNA + A + H2O</text>
        <dbReference type="Rhea" id="RHEA:64224"/>
        <dbReference type="Rhea" id="RHEA-COMP:11727"/>
        <dbReference type="Rhea" id="RHEA-COMP:13381"/>
        <dbReference type="ChEBI" id="CHEBI:13193"/>
        <dbReference type="ChEBI" id="CHEBI:15377"/>
        <dbReference type="ChEBI" id="CHEBI:15379"/>
        <dbReference type="ChEBI" id="CHEBI:17499"/>
        <dbReference type="ChEBI" id="CHEBI:65315"/>
        <dbReference type="ChEBI" id="CHEBI:136877"/>
    </reaction>
</comment>
<comment type="similarity">
    <text evidence="1">Belongs to the TrhO family.</text>
</comment>
<organism>
    <name type="scientific">Burkholderia pseudomallei (strain 1710b)</name>
    <dbReference type="NCBI Taxonomy" id="320372"/>
    <lineage>
        <taxon>Bacteria</taxon>
        <taxon>Pseudomonadati</taxon>
        <taxon>Pseudomonadota</taxon>
        <taxon>Betaproteobacteria</taxon>
        <taxon>Burkholderiales</taxon>
        <taxon>Burkholderiaceae</taxon>
        <taxon>Burkholderia</taxon>
        <taxon>pseudomallei group</taxon>
    </lineage>
</organism>
<name>TRHO_BURP1</name>
<dbReference type="EC" id="1.14.-.-" evidence="1"/>
<dbReference type="EMBL" id="CP000124">
    <property type="protein sequence ID" value="ABA48878.1"/>
    <property type="molecule type" value="Genomic_DNA"/>
</dbReference>
<dbReference type="RefSeq" id="WP_004185449.1">
    <property type="nucleotide sequence ID" value="NC_007434.1"/>
</dbReference>
<dbReference type="SMR" id="Q3JUI8"/>
<dbReference type="EnsemblBacteria" id="ABA48878">
    <property type="protein sequence ID" value="ABA48878"/>
    <property type="gene ID" value="BURPS1710b_1354"/>
</dbReference>
<dbReference type="KEGG" id="bpm:BURPS1710b_1354"/>
<dbReference type="HOGENOM" id="CLU_038878_0_1_4"/>
<dbReference type="Proteomes" id="UP000002700">
    <property type="component" value="Chromosome I"/>
</dbReference>
<dbReference type="GO" id="GO:0016705">
    <property type="term" value="F:oxidoreductase activity, acting on paired donors, with incorporation or reduction of molecular oxygen"/>
    <property type="evidence" value="ECO:0007669"/>
    <property type="project" value="UniProtKB-UniRule"/>
</dbReference>
<dbReference type="GO" id="GO:0006400">
    <property type="term" value="P:tRNA modification"/>
    <property type="evidence" value="ECO:0007669"/>
    <property type="project" value="UniProtKB-UniRule"/>
</dbReference>
<dbReference type="CDD" id="cd01518">
    <property type="entry name" value="RHOD_YceA"/>
    <property type="match status" value="1"/>
</dbReference>
<dbReference type="Gene3D" id="3.30.70.100">
    <property type="match status" value="1"/>
</dbReference>
<dbReference type="Gene3D" id="3.40.250.10">
    <property type="entry name" value="Rhodanese-like domain"/>
    <property type="match status" value="1"/>
</dbReference>
<dbReference type="HAMAP" id="MF_00469">
    <property type="entry name" value="TrhO"/>
    <property type="match status" value="1"/>
</dbReference>
<dbReference type="InterPro" id="IPR001763">
    <property type="entry name" value="Rhodanese-like_dom"/>
</dbReference>
<dbReference type="InterPro" id="IPR036873">
    <property type="entry name" value="Rhodanese-like_dom_sf"/>
</dbReference>
<dbReference type="InterPro" id="IPR020936">
    <property type="entry name" value="TrhO"/>
</dbReference>
<dbReference type="InterPro" id="IPR040503">
    <property type="entry name" value="TRHO_N"/>
</dbReference>
<dbReference type="NCBIfam" id="NF003703">
    <property type="entry name" value="PRK05320.1"/>
    <property type="match status" value="1"/>
</dbReference>
<dbReference type="PANTHER" id="PTHR43268:SF3">
    <property type="entry name" value="RHODANESE-LIKE DOMAIN-CONTAINING PROTEIN 7-RELATED"/>
    <property type="match status" value="1"/>
</dbReference>
<dbReference type="PANTHER" id="PTHR43268">
    <property type="entry name" value="THIOSULFATE SULFURTRANSFERASE/RHODANESE-LIKE DOMAIN-CONTAINING PROTEIN 2"/>
    <property type="match status" value="1"/>
</dbReference>
<dbReference type="Pfam" id="PF00581">
    <property type="entry name" value="Rhodanese"/>
    <property type="match status" value="1"/>
</dbReference>
<dbReference type="Pfam" id="PF17773">
    <property type="entry name" value="UPF0176_N"/>
    <property type="match status" value="1"/>
</dbReference>
<dbReference type="SMART" id="SM00450">
    <property type="entry name" value="RHOD"/>
    <property type="match status" value="1"/>
</dbReference>
<dbReference type="SUPFAM" id="SSF52821">
    <property type="entry name" value="Rhodanese/Cell cycle control phosphatase"/>
    <property type="match status" value="1"/>
</dbReference>
<dbReference type="PROSITE" id="PS50206">
    <property type="entry name" value="RHODANESE_3"/>
    <property type="match status" value="1"/>
</dbReference>
<accession>Q3JUI8</accession>
<feature type="chain" id="PRO_0000242913" description="tRNA uridine(34) hydroxylase">
    <location>
        <begin position="1"/>
        <end position="299"/>
    </location>
</feature>
<feature type="domain" description="Rhodanese" evidence="1">
    <location>
        <begin position="132"/>
        <end position="226"/>
    </location>
</feature>
<feature type="active site" description="Cysteine persulfide intermediate" evidence="1">
    <location>
        <position position="186"/>
    </location>
</feature>
<gene>
    <name evidence="1" type="primary">trhO</name>
    <name type="ordered locus">BURPS1710b_1354</name>
</gene>
<protein>
    <recommendedName>
        <fullName evidence="1">tRNA uridine(34) hydroxylase</fullName>
        <ecNumber evidence="1">1.14.-.-</ecNumber>
    </recommendedName>
    <alternativeName>
        <fullName evidence="1">tRNA hydroxylation protein O</fullName>
    </alternativeName>
</protein>
<sequence>MTTVNLAAYRFVSLDSIEQWRPLVAARCNTLGLRGTILLAPEGINLFIAGPREATDAFVDYIRHDPLFEGKFADLPFKESLSDSQPFRRMLVRLKREIITMKKPAIKPELGRAPSVDARTLKAWLDQGHDDAGRPVVMLDTRNAFEVDVGTFDRALDYRIDKFSEFPAVIEANRADLEGKTIVSFCTGGIRCEKAAIHMKDVGIENVYQLEGGILKYFEEVGGAHYHGDCFVFDYRTALNPQLAPTADVTCFACRAVVPADAQQSPLYVPGKCCPACHPGDSGTPGRRAEPGAEPARAV</sequence>
<reference key="1">
    <citation type="journal article" date="2010" name="Genome Biol. Evol.">
        <title>Continuing evolution of Burkholderia mallei through genome reduction and large-scale rearrangements.</title>
        <authorList>
            <person name="Losada L."/>
            <person name="Ronning C.M."/>
            <person name="DeShazer D."/>
            <person name="Woods D."/>
            <person name="Fedorova N."/>
            <person name="Kim H.S."/>
            <person name="Shabalina S.A."/>
            <person name="Pearson T.R."/>
            <person name="Brinkac L."/>
            <person name="Tan P."/>
            <person name="Nandi T."/>
            <person name="Crabtree J."/>
            <person name="Badger J."/>
            <person name="Beckstrom-Sternberg S."/>
            <person name="Saqib M."/>
            <person name="Schutzer S.E."/>
            <person name="Keim P."/>
            <person name="Nierman W.C."/>
        </authorList>
    </citation>
    <scope>NUCLEOTIDE SEQUENCE [LARGE SCALE GENOMIC DNA]</scope>
    <source>
        <strain>1710b</strain>
    </source>
</reference>
<proteinExistence type="inferred from homology"/>
<evidence type="ECO:0000255" key="1">
    <source>
        <dbReference type="HAMAP-Rule" id="MF_00469"/>
    </source>
</evidence>